<comment type="function">
    <text>Destroys radicals which are normally produced within the cells and which are toxic to biological systems.</text>
</comment>
<comment type="catalytic activity">
    <reaction>
        <text>2 superoxide + 2 H(+) = H2O2 + O2</text>
        <dbReference type="Rhea" id="RHEA:20696"/>
        <dbReference type="ChEBI" id="CHEBI:15378"/>
        <dbReference type="ChEBI" id="CHEBI:15379"/>
        <dbReference type="ChEBI" id="CHEBI:16240"/>
        <dbReference type="ChEBI" id="CHEBI:18421"/>
        <dbReference type="EC" id="1.15.1.1"/>
    </reaction>
</comment>
<comment type="cofactor">
    <cofactor evidence="1">
        <name>Cu cation</name>
        <dbReference type="ChEBI" id="CHEBI:23378"/>
    </cofactor>
    <text evidence="1">Binds 1 copper ion per subunit.</text>
</comment>
<comment type="cofactor">
    <cofactor evidence="1">
        <name>Zn(2+)</name>
        <dbReference type="ChEBI" id="CHEBI:29105"/>
    </cofactor>
    <text evidence="1">Binds 1 zinc ion per subunit.</text>
</comment>
<comment type="subunit">
    <text>Homotetramer.</text>
</comment>
<comment type="subcellular location">
    <subcellularLocation>
        <location>Plastid</location>
        <location>Chloroplast</location>
    </subcellularLocation>
</comment>
<comment type="similarity">
    <text evidence="2">Belongs to the Cu-Zn superoxide dismutase family.</text>
</comment>
<reference key="1">
    <citation type="journal article" date="1992" name="Plant Mol. Biol.">
        <title>Characterization of cDNAs encoding CuZn-superoxide dismutases in Scots pine.</title>
        <authorList>
            <person name="Karpinski S."/>
            <person name="Wingsle G."/>
            <person name="Olsson O."/>
            <person name="Haellgren J.E."/>
        </authorList>
    </citation>
    <scope>NUCLEOTIDE SEQUENCE [MRNA]</scope>
    <source>
        <tissue>Seedling</tissue>
    </source>
</reference>
<gene>
    <name type="primary">SODCP</name>
</gene>
<accession>P24707</accession>
<protein>
    <recommendedName>
        <fullName>Superoxide dismutase [Cu-Zn], chloroplastic</fullName>
        <ecNumber>1.15.1.1</ecNumber>
    </recommendedName>
</protein>
<evidence type="ECO:0000250" key="1"/>
<evidence type="ECO:0000305" key="2"/>
<keyword id="KW-0049">Antioxidant</keyword>
<keyword id="KW-0150">Chloroplast</keyword>
<keyword id="KW-0186">Copper</keyword>
<keyword id="KW-1015">Disulfide bond</keyword>
<keyword id="KW-0479">Metal-binding</keyword>
<keyword id="KW-0560">Oxidoreductase</keyword>
<keyword id="KW-0934">Plastid</keyword>
<keyword id="KW-0862">Zinc</keyword>
<organism>
    <name type="scientific">Pinus sylvestris</name>
    <name type="common">Scotch pine</name>
    <dbReference type="NCBI Taxonomy" id="3349"/>
    <lineage>
        <taxon>Eukaryota</taxon>
        <taxon>Viridiplantae</taxon>
        <taxon>Streptophyta</taxon>
        <taxon>Embryophyta</taxon>
        <taxon>Tracheophyta</taxon>
        <taxon>Spermatophyta</taxon>
        <taxon>Pinopsida</taxon>
        <taxon>Pinidae</taxon>
        <taxon>Conifers I</taxon>
        <taxon>Pinales</taxon>
        <taxon>Pinaceae</taxon>
        <taxon>Pinus</taxon>
        <taxon>Pinus subgen. Pinus</taxon>
    </lineage>
</organism>
<proteinExistence type="evidence at transcript level"/>
<dbReference type="EC" id="1.15.1.1"/>
<dbReference type="EMBL" id="X58579">
    <property type="protein sequence ID" value="CAA41455.1"/>
    <property type="molecule type" value="mRNA"/>
</dbReference>
<dbReference type="PIR" id="S20512">
    <property type="entry name" value="S20512"/>
</dbReference>
<dbReference type="SMR" id="P24707"/>
<dbReference type="GO" id="GO:0009507">
    <property type="term" value="C:chloroplast"/>
    <property type="evidence" value="ECO:0007669"/>
    <property type="project" value="UniProtKB-SubCell"/>
</dbReference>
<dbReference type="GO" id="GO:0005507">
    <property type="term" value="F:copper ion binding"/>
    <property type="evidence" value="ECO:0007669"/>
    <property type="project" value="InterPro"/>
</dbReference>
<dbReference type="GO" id="GO:0004784">
    <property type="term" value="F:superoxide dismutase activity"/>
    <property type="evidence" value="ECO:0007669"/>
    <property type="project" value="UniProtKB-EC"/>
</dbReference>
<dbReference type="CDD" id="cd00305">
    <property type="entry name" value="Cu-Zn_Superoxide_Dismutase"/>
    <property type="match status" value="1"/>
</dbReference>
<dbReference type="FunFam" id="2.60.40.200:FF:000003">
    <property type="entry name" value="Superoxide dismutase [Cu-Zn], chloroplastic"/>
    <property type="match status" value="1"/>
</dbReference>
<dbReference type="Gene3D" id="2.60.40.200">
    <property type="entry name" value="Superoxide dismutase, copper/zinc binding domain"/>
    <property type="match status" value="1"/>
</dbReference>
<dbReference type="InterPro" id="IPR036423">
    <property type="entry name" value="SOD-like_Cu/Zn_dom_sf"/>
</dbReference>
<dbReference type="InterPro" id="IPR024134">
    <property type="entry name" value="SOD_Cu/Zn_/chaperone"/>
</dbReference>
<dbReference type="InterPro" id="IPR018152">
    <property type="entry name" value="SOD_Cu/Zn_BS"/>
</dbReference>
<dbReference type="InterPro" id="IPR001424">
    <property type="entry name" value="SOD_Cu_Zn_dom"/>
</dbReference>
<dbReference type="PANTHER" id="PTHR10003">
    <property type="entry name" value="SUPEROXIDE DISMUTASE CU-ZN -RELATED"/>
    <property type="match status" value="1"/>
</dbReference>
<dbReference type="Pfam" id="PF00080">
    <property type="entry name" value="Sod_Cu"/>
    <property type="match status" value="1"/>
</dbReference>
<dbReference type="PRINTS" id="PR00068">
    <property type="entry name" value="CUZNDISMTASE"/>
</dbReference>
<dbReference type="SUPFAM" id="SSF49329">
    <property type="entry name" value="Cu,Zn superoxide dismutase-like"/>
    <property type="match status" value="1"/>
</dbReference>
<dbReference type="PROSITE" id="PS00087">
    <property type="entry name" value="SOD_CU_ZN_1"/>
    <property type="match status" value="1"/>
</dbReference>
<dbReference type="PROSITE" id="PS00332">
    <property type="entry name" value="SOD_CU_ZN_2"/>
    <property type="match status" value="1"/>
</dbReference>
<feature type="chain" id="PRO_0000164180" description="Superoxide dismutase [Cu-Zn], chloroplastic">
    <location>
        <begin position="1" status="less than"/>
        <end position="141"/>
    </location>
</feature>
<feature type="binding site" evidence="1">
    <location>
        <position position="33"/>
    </location>
    <ligand>
        <name>Cu cation</name>
        <dbReference type="ChEBI" id="CHEBI:23378"/>
        <note>catalytic</note>
    </ligand>
</feature>
<feature type="binding site" evidence="1">
    <location>
        <position position="35"/>
    </location>
    <ligand>
        <name>Cu cation</name>
        <dbReference type="ChEBI" id="CHEBI:23378"/>
        <note>catalytic</note>
    </ligand>
</feature>
<feature type="binding site" evidence="1">
    <location>
        <position position="50"/>
    </location>
    <ligand>
        <name>Cu cation</name>
        <dbReference type="ChEBI" id="CHEBI:23378"/>
        <note>catalytic</note>
    </ligand>
</feature>
<feature type="binding site" evidence="1">
    <location>
        <position position="50"/>
    </location>
    <ligand>
        <name>Zn(2+)</name>
        <dbReference type="ChEBI" id="CHEBI:29105"/>
        <note>structural</note>
    </ligand>
</feature>
<feature type="binding site" evidence="1">
    <location>
        <position position="58"/>
    </location>
    <ligand>
        <name>Zn(2+)</name>
        <dbReference type="ChEBI" id="CHEBI:29105"/>
        <note>structural</note>
    </ligand>
</feature>
<feature type="binding site" evidence="1">
    <location>
        <position position="67"/>
    </location>
    <ligand>
        <name>Zn(2+)</name>
        <dbReference type="ChEBI" id="CHEBI:29105"/>
        <note>structural</note>
    </ligand>
</feature>
<feature type="binding site" evidence="1">
    <location>
        <position position="70"/>
    </location>
    <ligand>
        <name>Zn(2+)</name>
        <dbReference type="ChEBI" id="CHEBI:29105"/>
        <note>structural</note>
    </ligand>
</feature>
<feature type="binding site" evidence="1">
    <location>
        <position position="107"/>
    </location>
    <ligand>
        <name>Cu cation</name>
        <dbReference type="ChEBI" id="CHEBI:23378"/>
        <note>catalytic</note>
    </ligand>
</feature>
<feature type="disulfide bond" evidence="1">
    <location>
        <begin position="44"/>
        <end position="133"/>
    </location>
</feature>
<feature type="non-terminal residue">
    <location>
        <position position="1"/>
    </location>
</feature>
<name>SODCP_PINSY</name>
<sequence length="141" mass="14435">QVEGVVTLSQEDNGPTTVKVRLTGLTPGKHGFHLHEFGDTTNGCMSTGSHFNPKKLTHGAPEDDVRHAGDLGNIVAGSDGVAEATIVDNQIPLSGPDSVIGRALVVHELEDDLGKGGHELSLTTGNAGGRLACGVVGLTPI</sequence>